<evidence type="ECO:0000255" key="1">
    <source>
        <dbReference type="HAMAP-Rule" id="MF_01302"/>
    </source>
</evidence>
<evidence type="ECO:0000305" key="2"/>
<accession>Q49ZF4</accession>
<name>RS8_STAS1</name>
<organism>
    <name type="scientific">Staphylococcus saprophyticus subsp. saprophyticus (strain ATCC 15305 / DSM 20229 / NCIMB 8711 / NCTC 7292 / S-41)</name>
    <dbReference type="NCBI Taxonomy" id="342451"/>
    <lineage>
        <taxon>Bacteria</taxon>
        <taxon>Bacillati</taxon>
        <taxon>Bacillota</taxon>
        <taxon>Bacilli</taxon>
        <taxon>Bacillales</taxon>
        <taxon>Staphylococcaceae</taxon>
        <taxon>Staphylococcus</taxon>
    </lineage>
</organism>
<comment type="function">
    <text evidence="1">One of the primary rRNA binding proteins, it binds directly to 16S rRNA central domain where it helps coordinate assembly of the platform of the 30S subunit.</text>
</comment>
<comment type="subunit">
    <text evidence="1">Part of the 30S ribosomal subunit. Contacts proteins S5 and S12.</text>
</comment>
<comment type="similarity">
    <text evidence="1">Belongs to the universal ribosomal protein uS8 family.</text>
</comment>
<gene>
    <name evidence="1" type="primary">rpsH</name>
    <name type="ordered locus">SSP0677</name>
</gene>
<proteinExistence type="inferred from homology"/>
<sequence>MTINDPIADMLTRVRNANMVRHDKLELPASNIKKEIAEILKSEGFIKNVEYVEDDKQGVIRLFLKYGQNNERVITGLKRISKPGLRVYAKANEVPKVLNGLGIALVSTSEGVVTDKEARKRNIGGEILGYIW</sequence>
<protein>
    <recommendedName>
        <fullName evidence="1">Small ribosomal subunit protein uS8</fullName>
    </recommendedName>
    <alternativeName>
        <fullName evidence="2">30S ribosomal protein S8</fullName>
    </alternativeName>
</protein>
<keyword id="KW-1185">Reference proteome</keyword>
<keyword id="KW-0687">Ribonucleoprotein</keyword>
<keyword id="KW-0689">Ribosomal protein</keyword>
<keyword id="KW-0694">RNA-binding</keyword>
<keyword id="KW-0699">rRNA-binding</keyword>
<dbReference type="EMBL" id="AP008934">
    <property type="protein sequence ID" value="BAE17822.1"/>
    <property type="molecule type" value="Genomic_DNA"/>
</dbReference>
<dbReference type="RefSeq" id="WP_002482626.1">
    <property type="nucleotide sequence ID" value="NZ_MTGA01000036.1"/>
</dbReference>
<dbReference type="SMR" id="Q49ZF4"/>
<dbReference type="GeneID" id="66866824"/>
<dbReference type="KEGG" id="ssp:SSP0677"/>
<dbReference type="eggNOG" id="COG0096">
    <property type="taxonomic scope" value="Bacteria"/>
</dbReference>
<dbReference type="HOGENOM" id="CLU_098428_0_2_9"/>
<dbReference type="OrthoDB" id="9802617at2"/>
<dbReference type="Proteomes" id="UP000006371">
    <property type="component" value="Chromosome"/>
</dbReference>
<dbReference type="GO" id="GO:1990904">
    <property type="term" value="C:ribonucleoprotein complex"/>
    <property type="evidence" value="ECO:0007669"/>
    <property type="project" value="UniProtKB-KW"/>
</dbReference>
<dbReference type="GO" id="GO:0005840">
    <property type="term" value="C:ribosome"/>
    <property type="evidence" value="ECO:0007669"/>
    <property type="project" value="UniProtKB-KW"/>
</dbReference>
<dbReference type="GO" id="GO:0019843">
    <property type="term" value="F:rRNA binding"/>
    <property type="evidence" value="ECO:0007669"/>
    <property type="project" value="UniProtKB-UniRule"/>
</dbReference>
<dbReference type="GO" id="GO:0003735">
    <property type="term" value="F:structural constituent of ribosome"/>
    <property type="evidence" value="ECO:0007669"/>
    <property type="project" value="InterPro"/>
</dbReference>
<dbReference type="GO" id="GO:0006412">
    <property type="term" value="P:translation"/>
    <property type="evidence" value="ECO:0007669"/>
    <property type="project" value="UniProtKB-UniRule"/>
</dbReference>
<dbReference type="FunFam" id="3.30.1370.30:FF:000002">
    <property type="entry name" value="30S ribosomal protein S8"/>
    <property type="match status" value="1"/>
</dbReference>
<dbReference type="FunFam" id="3.30.1490.10:FF:000001">
    <property type="entry name" value="30S ribosomal protein S8"/>
    <property type="match status" value="1"/>
</dbReference>
<dbReference type="Gene3D" id="3.30.1370.30">
    <property type="match status" value="1"/>
</dbReference>
<dbReference type="Gene3D" id="3.30.1490.10">
    <property type="match status" value="1"/>
</dbReference>
<dbReference type="HAMAP" id="MF_01302_B">
    <property type="entry name" value="Ribosomal_uS8_B"/>
    <property type="match status" value="1"/>
</dbReference>
<dbReference type="InterPro" id="IPR000630">
    <property type="entry name" value="Ribosomal_uS8"/>
</dbReference>
<dbReference type="InterPro" id="IPR047863">
    <property type="entry name" value="Ribosomal_uS8_CS"/>
</dbReference>
<dbReference type="InterPro" id="IPR035987">
    <property type="entry name" value="Ribosomal_uS8_sf"/>
</dbReference>
<dbReference type="NCBIfam" id="NF001109">
    <property type="entry name" value="PRK00136.1"/>
    <property type="match status" value="1"/>
</dbReference>
<dbReference type="PANTHER" id="PTHR11758">
    <property type="entry name" value="40S RIBOSOMAL PROTEIN S15A"/>
    <property type="match status" value="1"/>
</dbReference>
<dbReference type="Pfam" id="PF00410">
    <property type="entry name" value="Ribosomal_S8"/>
    <property type="match status" value="1"/>
</dbReference>
<dbReference type="SUPFAM" id="SSF56047">
    <property type="entry name" value="Ribosomal protein S8"/>
    <property type="match status" value="1"/>
</dbReference>
<dbReference type="PROSITE" id="PS00053">
    <property type="entry name" value="RIBOSOMAL_S8"/>
    <property type="match status" value="1"/>
</dbReference>
<reference key="1">
    <citation type="journal article" date="2005" name="Proc. Natl. Acad. Sci. U.S.A.">
        <title>Whole genome sequence of Staphylococcus saprophyticus reveals the pathogenesis of uncomplicated urinary tract infection.</title>
        <authorList>
            <person name="Kuroda M."/>
            <person name="Yamashita A."/>
            <person name="Hirakawa H."/>
            <person name="Kumano M."/>
            <person name="Morikawa K."/>
            <person name="Higashide M."/>
            <person name="Maruyama A."/>
            <person name="Inose Y."/>
            <person name="Matoba K."/>
            <person name="Toh H."/>
            <person name="Kuhara S."/>
            <person name="Hattori M."/>
            <person name="Ohta T."/>
        </authorList>
    </citation>
    <scope>NUCLEOTIDE SEQUENCE [LARGE SCALE GENOMIC DNA]</scope>
    <source>
        <strain>ATCC 15305 / DSM 20229 / NCIMB 8711 / NCTC 7292 / S-41</strain>
    </source>
</reference>
<feature type="chain" id="PRO_0000225895" description="Small ribosomal subunit protein uS8">
    <location>
        <begin position="1"/>
        <end position="132"/>
    </location>
</feature>